<organism>
    <name type="scientific">Bacillus mycoides (strain KBAB4)</name>
    <name type="common">Bacillus weihenstephanensis</name>
    <dbReference type="NCBI Taxonomy" id="315730"/>
    <lineage>
        <taxon>Bacteria</taxon>
        <taxon>Bacillati</taxon>
        <taxon>Bacillota</taxon>
        <taxon>Bacilli</taxon>
        <taxon>Bacillales</taxon>
        <taxon>Bacillaceae</taxon>
        <taxon>Bacillus</taxon>
        <taxon>Bacillus cereus group</taxon>
    </lineage>
</organism>
<dbReference type="EC" id="6.3.5.3" evidence="1"/>
<dbReference type="EMBL" id="CP000903">
    <property type="protein sequence ID" value="ABY41541.1"/>
    <property type="molecule type" value="Genomic_DNA"/>
</dbReference>
<dbReference type="RefSeq" id="WP_012260223.1">
    <property type="nucleotide sequence ID" value="NC_010184.1"/>
</dbReference>
<dbReference type="SMR" id="A9VRF1"/>
<dbReference type="KEGG" id="bwe:BcerKBAB4_0275"/>
<dbReference type="eggNOG" id="COG0046">
    <property type="taxonomic scope" value="Bacteria"/>
</dbReference>
<dbReference type="HOGENOM" id="CLU_003100_0_1_9"/>
<dbReference type="UniPathway" id="UPA00074">
    <property type="reaction ID" value="UER00128"/>
</dbReference>
<dbReference type="Proteomes" id="UP000002154">
    <property type="component" value="Chromosome"/>
</dbReference>
<dbReference type="GO" id="GO:0005737">
    <property type="term" value="C:cytoplasm"/>
    <property type="evidence" value="ECO:0007669"/>
    <property type="project" value="UniProtKB-SubCell"/>
</dbReference>
<dbReference type="GO" id="GO:0005524">
    <property type="term" value="F:ATP binding"/>
    <property type="evidence" value="ECO:0007669"/>
    <property type="project" value="UniProtKB-UniRule"/>
</dbReference>
<dbReference type="GO" id="GO:0000287">
    <property type="term" value="F:magnesium ion binding"/>
    <property type="evidence" value="ECO:0007669"/>
    <property type="project" value="UniProtKB-UniRule"/>
</dbReference>
<dbReference type="GO" id="GO:0004642">
    <property type="term" value="F:phosphoribosylformylglycinamidine synthase activity"/>
    <property type="evidence" value="ECO:0007669"/>
    <property type="project" value="UniProtKB-UniRule"/>
</dbReference>
<dbReference type="GO" id="GO:0006189">
    <property type="term" value="P:'de novo' IMP biosynthetic process"/>
    <property type="evidence" value="ECO:0007669"/>
    <property type="project" value="UniProtKB-UniRule"/>
</dbReference>
<dbReference type="CDD" id="cd02203">
    <property type="entry name" value="PurL_repeat1"/>
    <property type="match status" value="1"/>
</dbReference>
<dbReference type="CDD" id="cd02204">
    <property type="entry name" value="PurL_repeat2"/>
    <property type="match status" value="1"/>
</dbReference>
<dbReference type="FunFam" id="3.30.1330.10:FF:000004">
    <property type="entry name" value="Phosphoribosylformylglycinamidine synthase subunit PurL"/>
    <property type="match status" value="1"/>
</dbReference>
<dbReference type="FunFam" id="3.30.1330.10:FF:000011">
    <property type="entry name" value="Phosphoribosylformylglycinamidine synthase subunit PurL"/>
    <property type="match status" value="1"/>
</dbReference>
<dbReference type="FunFam" id="3.90.650.10:FF:000009">
    <property type="entry name" value="Phosphoribosylformylglycinamidine synthase subunit PurL"/>
    <property type="match status" value="1"/>
</dbReference>
<dbReference type="FunFam" id="3.90.650.10:FF:000013">
    <property type="entry name" value="Phosphoribosylformylglycinamidine synthase subunit PurL"/>
    <property type="match status" value="1"/>
</dbReference>
<dbReference type="Gene3D" id="3.90.650.10">
    <property type="entry name" value="PurM-like C-terminal domain"/>
    <property type="match status" value="2"/>
</dbReference>
<dbReference type="Gene3D" id="3.30.1330.10">
    <property type="entry name" value="PurM-like, N-terminal domain"/>
    <property type="match status" value="2"/>
</dbReference>
<dbReference type="HAMAP" id="MF_00420">
    <property type="entry name" value="PurL_2"/>
    <property type="match status" value="1"/>
</dbReference>
<dbReference type="InterPro" id="IPR010074">
    <property type="entry name" value="PRibForGlyAmidine_synth_PurL"/>
</dbReference>
<dbReference type="InterPro" id="IPR041609">
    <property type="entry name" value="PurL_linker"/>
</dbReference>
<dbReference type="InterPro" id="IPR010918">
    <property type="entry name" value="PurM-like_C_dom"/>
</dbReference>
<dbReference type="InterPro" id="IPR036676">
    <property type="entry name" value="PurM-like_C_sf"/>
</dbReference>
<dbReference type="InterPro" id="IPR016188">
    <property type="entry name" value="PurM-like_N"/>
</dbReference>
<dbReference type="InterPro" id="IPR036921">
    <property type="entry name" value="PurM-like_N_sf"/>
</dbReference>
<dbReference type="NCBIfam" id="TIGR01736">
    <property type="entry name" value="FGAM_synth_II"/>
    <property type="match status" value="1"/>
</dbReference>
<dbReference type="NCBIfam" id="NF002290">
    <property type="entry name" value="PRK01213.1"/>
    <property type="match status" value="1"/>
</dbReference>
<dbReference type="PANTHER" id="PTHR43555">
    <property type="entry name" value="PHOSPHORIBOSYLFORMYLGLYCINAMIDINE SYNTHASE SUBUNIT PURL"/>
    <property type="match status" value="1"/>
</dbReference>
<dbReference type="PANTHER" id="PTHR43555:SF1">
    <property type="entry name" value="PHOSPHORIBOSYLFORMYLGLYCINAMIDINE SYNTHASE SUBUNIT PURL"/>
    <property type="match status" value="1"/>
</dbReference>
<dbReference type="Pfam" id="PF00586">
    <property type="entry name" value="AIRS"/>
    <property type="match status" value="2"/>
</dbReference>
<dbReference type="Pfam" id="PF02769">
    <property type="entry name" value="AIRS_C"/>
    <property type="match status" value="2"/>
</dbReference>
<dbReference type="Pfam" id="PF18072">
    <property type="entry name" value="FGAR-AT_linker"/>
    <property type="match status" value="1"/>
</dbReference>
<dbReference type="PIRSF" id="PIRSF001587">
    <property type="entry name" value="FGAM_synthase_II"/>
    <property type="match status" value="1"/>
</dbReference>
<dbReference type="SUPFAM" id="SSF56042">
    <property type="entry name" value="PurM C-terminal domain-like"/>
    <property type="match status" value="2"/>
</dbReference>
<dbReference type="SUPFAM" id="SSF55326">
    <property type="entry name" value="PurM N-terminal domain-like"/>
    <property type="match status" value="2"/>
</dbReference>
<proteinExistence type="inferred from homology"/>
<gene>
    <name evidence="1" type="primary">purL</name>
    <name type="ordered locus">BcerKBAB4_0275</name>
</gene>
<evidence type="ECO:0000255" key="1">
    <source>
        <dbReference type="HAMAP-Rule" id="MF_00420"/>
    </source>
</evidence>
<feature type="chain" id="PRO_1000194822" description="Phosphoribosylformylglycinamidine synthase subunit PurL">
    <location>
        <begin position="1"/>
        <end position="739"/>
    </location>
</feature>
<feature type="active site" evidence="1">
    <location>
        <position position="54"/>
    </location>
</feature>
<feature type="active site" description="Proton acceptor" evidence="1">
    <location>
        <position position="100"/>
    </location>
</feature>
<feature type="binding site" evidence="1">
    <location>
        <position position="57"/>
    </location>
    <ligand>
        <name>ATP</name>
        <dbReference type="ChEBI" id="CHEBI:30616"/>
    </ligand>
</feature>
<feature type="binding site" evidence="1">
    <location>
        <position position="96"/>
    </location>
    <ligand>
        <name>ATP</name>
        <dbReference type="ChEBI" id="CHEBI:30616"/>
    </ligand>
</feature>
<feature type="binding site" evidence="1">
    <location>
        <position position="98"/>
    </location>
    <ligand>
        <name>Mg(2+)</name>
        <dbReference type="ChEBI" id="CHEBI:18420"/>
        <label>1</label>
    </ligand>
</feature>
<feature type="binding site" evidence="1">
    <location>
        <begin position="99"/>
        <end position="102"/>
    </location>
    <ligand>
        <name>substrate</name>
    </ligand>
</feature>
<feature type="binding site" evidence="1">
    <location>
        <position position="121"/>
    </location>
    <ligand>
        <name>substrate</name>
    </ligand>
</feature>
<feature type="binding site" evidence="1">
    <location>
        <position position="122"/>
    </location>
    <ligand>
        <name>Mg(2+)</name>
        <dbReference type="ChEBI" id="CHEBI:18420"/>
        <label>2</label>
    </ligand>
</feature>
<feature type="binding site" evidence="1">
    <location>
        <position position="245"/>
    </location>
    <ligand>
        <name>substrate</name>
    </ligand>
</feature>
<feature type="binding site" evidence="1">
    <location>
        <position position="273"/>
    </location>
    <ligand>
        <name>Mg(2+)</name>
        <dbReference type="ChEBI" id="CHEBI:18420"/>
        <label>2</label>
    </ligand>
</feature>
<feature type="binding site" evidence="1">
    <location>
        <begin position="317"/>
        <end position="319"/>
    </location>
    <ligand>
        <name>substrate</name>
    </ligand>
</feature>
<feature type="binding site" evidence="1">
    <location>
        <position position="500"/>
    </location>
    <ligand>
        <name>ATP</name>
        <dbReference type="ChEBI" id="CHEBI:30616"/>
    </ligand>
</feature>
<feature type="binding site" evidence="1">
    <location>
        <position position="537"/>
    </location>
    <ligand>
        <name>ATP</name>
        <dbReference type="ChEBI" id="CHEBI:30616"/>
    </ligand>
</feature>
<feature type="binding site" evidence="1">
    <location>
        <position position="538"/>
    </location>
    <ligand>
        <name>Mg(2+)</name>
        <dbReference type="ChEBI" id="CHEBI:18420"/>
        <label>1</label>
    </ligand>
</feature>
<feature type="binding site" evidence="1">
    <location>
        <position position="540"/>
    </location>
    <ligand>
        <name>substrate</name>
    </ligand>
</feature>
<comment type="function">
    <text evidence="1">Part of the phosphoribosylformylglycinamidine synthase complex involved in the purines biosynthetic pathway. Catalyzes the ATP-dependent conversion of formylglycinamide ribonucleotide (FGAR) and glutamine to yield formylglycinamidine ribonucleotide (FGAM) and glutamate. The FGAM synthase complex is composed of three subunits. PurQ produces an ammonia molecule by converting glutamine to glutamate. PurL transfers the ammonia molecule to FGAR to form FGAM in an ATP-dependent manner. PurS interacts with PurQ and PurL and is thought to assist in the transfer of the ammonia molecule from PurQ to PurL.</text>
</comment>
<comment type="catalytic activity">
    <reaction evidence="1">
        <text>N(2)-formyl-N(1)-(5-phospho-beta-D-ribosyl)glycinamide + L-glutamine + ATP + H2O = 2-formamido-N(1)-(5-O-phospho-beta-D-ribosyl)acetamidine + L-glutamate + ADP + phosphate + H(+)</text>
        <dbReference type="Rhea" id="RHEA:17129"/>
        <dbReference type="ChEBI" id="CHEBI:15377"/>
        <dbReference type="ChEBI" id="CHEBI:15378"/>
        <dbReference type="ChEBI" id="CHEBI:29985"/>
        <dbReference type="ChEBI" id="CHEBI:30616"/>
        <dbReference type="ChEBI" id="CHEBI:43474"/>
        <dbReference type="ChEBI" id="CHEBI:58359"/>
        <dbReference type="ChEBI" id="CHEBI:147286"/>
        <dbReference type="ChEBI" id="CHEBI:147287"/>
        <dbReference type="ChEBI" id="CHEBI:456216"/>
        <dbReference type="EC" id="6.3.5.3"/>
    </reaction>
</comment>
<comment type="pathway">
    <text evidence="1">Purine metabolism; IMP biosynthesis via de novo pathway; 5-amino-1-(5-phospho-D-ribosyl)imidazole from N(2)-formyl-N(1)-(5-phospho-D-ribosyl)glycinamide: step 1/2.</text>
</comment>
<comment type="subunit">
    <text evidence="1">Monomer. Part of the FGAM synthase complex composed of 1 PurL, 1 PurQ and 2 PurS subunits.</text>
</comment>
<comment type="subcellular location">
    <subcellularLocation>
        <location evidence="1">Cytoplasm</location>
    </subcellularLocation>
</comment>
<comment type="similarity">
    <text evidence="1">Belongs to the FGAMS family.</text>
</comment>
<accession>A9VRF1</accession>
<keyword id="KW-0067">ATP-binding</keyword>
<keyword id="KW-0963">Cytoplasm</keyword>
<keyword id="KW-0436">Ligase</keyword>
<keyword id="KW-0460">Magnesium</keyword>
<keyword id="KW-0479">Metal-binding</keyword>
<keyword id="KW-0547">Nucleotide-binding</keyword>
<keyword id="KW-0658">Purine biosynthesis</keyword>
<reference key="1">
    <citation type="journal article" date="2008" name="Chem. Biol. Interact.">
        <title>Extending the Bacillus cereus group genomics to putative food-borne pathogens of different toxicity.</title>
        <authorList>
            <person name="Lapidus A."/>
            <person name="Goltsman E."/>
            <person name="Auger S."/>
            <person name="Galleron N."/>
            <person name="Segurens B."/>
            <person name="Dossat C."/>
            <person name="Land M.L."/>
            <person name="Broussolle V."/>
            <person name="Brillard J."/>
            <person name="Guinebretiere M.-H."/>
            <person name="Sanchis V."/>
            <person name="Nguen-the C."/>
            <person name="Lereclus D."/>
            <person name="Richardson P."/>
            <person name="Wincker P."/>
            <person name="Weissenbach J."/>
            <person name="Ehrlich S.D."/>
            <person name="Sorokin A."/>
        </authorList>
    </citation>
    <scope>NUCLEOTIDE SEQUENCE [LARGE SCALE GENOMIC DNA]</scope>
    <source>
        <strain>KBAB4</strain>
    </source>
</reference>
<name>PURL_BACMK</name>
<sequence>MSLMLEPNPTQIKEERIYAEMGLTDEEFAMVEKILGRLPNYTETGLFSVMWSEHCSYKNSKPVLRKFPTTGERVLQGPGEGAGIVDIGDNQAVVFKMESHNHPSAIEPYQGAATGVGGIIRDVFSMGARPVALLNSLRFGELQSPRVKYLFEEVVAGIAGYGNCIGIPTVGGEVQFDPCYEGNPLVNAMCVGLINHEDIKKGQAHGAGNTVMYVGASTGRDGIHGATFASEELSESSEAKRPAVQVGDPFMEKLLIEACLELIQSDALVGIQDMGAAGLTSSSAEMASKAGMGIEMYLDDVPQRETGMTPYEMMLSESQERMLIVVKKGREQEIVDLFEKYGLAAVTMGKVTEDKMLRLFHKDEMVAEVPADALAEEAPIYHKPSKEAAYFAEFQQMKMETPKVEDYKETLLALLQQPTIASKEWVYDQYDYQVRTSTIVTPGSDAAVIRVRGTEKGLAMTTDCNSRYIYLDPEVGGKIAVAEAARNIVCSGGEPLAITDCLNFGNPEKPEIFWQIEKSVDGMSEACRKLQTPVIGGNVSMYNERSGEAVYPTPTVGMVGLVHDLKHVTTQEFKQAGDLVYVIGETKAEFGGSELQKMIYGKIFGQSPSIDLDVELKRQKQVLAAIQAGLVQSAHDVAEGGLAVAITESAIGAKGLGATVKLDGEATAVLFAESQSRFVITVKRENKEAFEKAVEAIQVGEVTNTNEVTIHNEENEVLLTANVDEMRKAWKGAIPCLLK</sequence>
<protein>
    <recommendedName>
        <fullName evidence="1">Phosphoribosylformylglycinamidine synthase subunit PurL</fullName>
        <shortName evidence="1">FGAM synthase</shortName>
        <ecNumber evidence="1">6.3.5.3</ecNumber>
    </recommendedName>
    <alternativeName>
        <fullName evidence="1">Formylglycinamide ribonucleotide amidotransferase subunit II</fullName>
        <shortName evidence="1">FGAR amidotransferase II</shortName>
        <shortName evidence="1">FGAR-AT II</shortName>
    </alternativeName>
    <alternativeName>
        <fullName evidence="1">Glutamine amidotransferase PurL</fullName>
    </alternativeName>
    <alternativeName>
        <fullName evidence="1">Phosphoribosylformylglycinamidine synthase subunit II</fullName>
    </alternativeName>
</protein>